<organism>
    <name type="scientific">Mus musculus</name>
    <name type="common">Mouse</name>
    <dbReference type="NCBI Taxonomy" id="10090"/>
    <lineage>
        <taxon>Eukaryota</taxon>
        <taxon>Metazoa</taxon>
        <taxon>Chordata</taxon>
        <taxon>Craniata</taxon>
        <taxon>Vertebrata</taxon>
        <taxon>Euteleostomi</taxon>
        <taxon>Mammalia</taxon>
        <taxon>Eutheria</taxon>
        <taxon>Euarchontoglires</taxon>
        <taxon>Glires</taxon>
        <taxon>Rodentia</taxon>
        <taxon>Myomorpha</taxon>
        <taxon>Muroidea</taxon>
        <taxon>Muridae</taxon>
        <taxon>Murinae</taxon>
        <taxon>Mus</taxon>
        <taxon>Mus</taxon>
    </lineage>
</organism>
<feature type="chain" id="PRO_0000032487" description="Serpin B5">
    <location>
        <begin position="1"/>
        <end position="375"/>
    </location>
</feature>
<feature type="site" description="Reactive bond homolog" evidence="1">
    <location>
        <begin position="340"/>
        <end position="341"/>
    </location>
</feature>
<feature type="glycosylation site" description="N-linked (GlcNAc...) asparagine" evidence="2">
    <location>
        <position position="133"/>
    </location>
</feature>
<feature type="glycosylation site" description="N-linked (GlcNAc...) asparagine" evidence="2">
    <location>
        <position position="298"/>
    </location>
</feature>
<feature type="glycosylation site" description="N-linked (GlcNAc...) asparagine" evidence="2">
    <location>
        <position position="361"/>
    </location>
</feature>
<dbReference type="EMBL" id="U54705">
    <property type="protein sequence ID" value="AAB06042.1"/>
    <property type="molecule type" value="mRNA"/>
</dbReference>
<dbReference type="EMBL" id="AK136532">
    <property type="protein sequence ID" value="BAE23032.1"/>
    <property type="molecule type" value="mRNA"/>
</dbReference>
<dbReference type="EMBL" id="AK145220">
    <property type="protein sequence ID" value="BAE26308.1"/>
    <property type="molecule type" value="mRNA"/>
</dbReference>
<dbReference type="EMBL" id="CH466520">
    <property type="protein sequence ID" value="EDL39856.1"/>
    <property type="molecule type" value="Genomic_DNA"/>
</dbReference>
<dbReference type="EMBL" id="CH466520">
    <property type="protein sequence ID" value="EDL39857.1"/>
    <property type="molecule type" value="Genomic_DNA"/>
</dbReference>
<dbReference type="EMBL" id="BC005434">
    <property type="protein sequence ID" value="AAH05434.1"/>
    <property type="molecule type" value="mRNA"/>
</dbReference>
<dbReference type="CCDS" id="CCDS35684.1"/>
<dbReference type="RefSeq" id="NP_001347782.1">
    <property type="nucleotide sequence ID" value="NM_001360853.1"/>
</dbReference>
<dbReference type="RefSeq" id="NP_033283.1">
    <property type="nucleotide sequence ID" value="NM_009257.4"/>
</dbReference>
<dbReference type="SMR" id="P70124"/>
<dbReference type="BioGRID" id="203447">
    <property type="interactions" value="12"/>
</dbReference>
<dbReference type="FunCoup" id="P70124">
    <property type="interactions" value="162"/>
</dbReference>
<dbReference type="STRING" id="10090.ENSMUSP00000108350"/>
<dbReference type="MEROPS" id="I04.980"/>
<dbReference type="GlyCosmos" id="P70124">
    <property type="glycosylation" value="3 sites, No reported glycans"/>
</dbReference>
<dbReference type="GlyGen" id="P70124">
    <property type="glycosylation" value="3 sites"/>
</dbReference>
<dbReference type="iPTMnet" id="P70124"/>
<dbReference type="PhosphoSitePlus" id="P70124"/>
<dbReference type="CPTAC" id="non-CPTAC-4010"/>
<dbReference type="PaxDb" id="10090-ENSMUSP00000083908"/>
<dbReference type="PeptideAtlas" id="P70124"/>
<dbReference type="ProteomicsDB" id="257340"/>
<dbReference type="Pumba" id="P70124"/>
<dbReference type="Antibodypedia" id="4036">
    <property type="antibodies" value="624 antibodies from 43 providers"/>
</dbReference>
<dbReference type="DNASU" id="20724"/>
<dbReference type="Ensembl" id="ENSMUST00000086701.13">
    <property type="protein sequence ID" value="ENSMUSP00000083908.7"/>
    <property type="gene ID" value="ENSMUSG00000067006.13"/>
</dbReference>
<dbReference type="Ensembl" id="ENSMUST00000112729.3">
    <property type="protein sequence ID" value="ENSMUSP00000108349.2"/>
    <property type="gene ID" value="ENSMUSG00000067006.13"/>
</dbReference>
<dbReference type="Ensembl" id="ENSMUST00000112730.8">
    <property type="protein sequence ID" value="ENSMUSP00000108350.2"/>
    <property type="gene ID" value="ENSMUSG00000067006.13"/>
</dbReference>
<dbReference type="GeneID" id="20724"/>
<dbReference type="KEGG" id="mmu:20724"/>
<dbReference type="UCSC" id="uc007cha.1">
    <property type="organism name" value="mouse"/>
</dbReference>
<dbReference type="AGR" id="MGI:109579"/>
<dbReference type="CTD" id="5268"/>
<dbReference type="MGI" id="MGI:109579">
    <property type="gene designation" value="Serpinb5"/>
</dbReference>
<dbReference type="VEuPathDB" id="HostDB:ENSMUSG00000067006"/>
<dbReference type="eggNOG" id="KOG2392">
    <property type="taxonomic scope" value="Eukaryota"/>
</dbReference>
<dbReference type="GeneTree" id="ENSGT00940000160674"/>
<dbReference type="HOGENOM" id="CLU_023330_0_2_1"/>
<dbReference type="InParanoid" id="P70124"/>
<dbReference type="OMA" id="FITNWMK"/>
<dbReference type="OrthoDB" id="671595at2759"/>
<dbReference type="PhylomeDB" id="P70124"/>
<dbReference type="TreeFam" id="TF352619"/>
<dbReference type="BioGRID-ORCS" id="20724">
    <property type="hits" value="1 hit in 79 CRISPR screens"/>
</dbReference>
<dbReference type="PRO" id="PR:P70124"/>
<dbReference type="Proteomes" id="UP000000589">
    <property type="component" value="Chromosome 1"/>
</dbReference>
<dbReference type="RNAct" id="P70124">
    <property type="molecule type" value="protein"/>
</dbReference>
<dbReference type="Bgee" id="ENSMUSG00000067006">
    <property type="expression patterns" value="Expressed in tail skin and 108 other cell types or tissues"/>
</dbReference>
<dbReference type="ExpressionAtlas" id="P70124">
    <property type="expression patterns" value="baseline and differential"/>
</dbReference>
<dbReference type="GO" id="GO:0001533">
    <property type="term" value="C:cornified envelope"/>
    <property type="evidence" value="ECO:0000314"/>
    <property type="project" value="MGI"/>
</dbReference>
<dbReference type="GO" id="GO:0005737">
    <property type="term" value="C:cytoplasm"/>
    <property type="evidence" value="ECO:0000314"/>
    <property type="project" value="MGI"/>
</dbReference>
<dbReference type="GO" id="GO:0005615">
    <property type="term" value="C:extracellular space"/>
    <property type="evidence" value="ECO:0007669"/>
    <property type="project" value="InterPro"/>
</dbReference>
<dbReference type="GO" id="GO:0016528">
    <property type="term" value="C:sarcoplasm"/>
    <property type="evidence" value="ECO:0000314"/>
    <property type="project" value="MGI"/>
</dbReference>
<dbReference type="GO" id="GO:0004867">
    <property type="term" value="F:serine-type endopeptidase inhibitor activity"/>
    <property type="evidence" value="ECO:0007669"/>
    <property type="project" value="InterPro"/>
</dbReference>
<dbReference type="GO" id="GO:0030198">
    <property type="term" value="P:extracellular matrix organization"/>
    <property type="evidence" value="ECO:0000315"/>
    <property type="project" value="MGI"/>
</dbReference>
<dbReference type="GO" id="GO:0002009">
    <property type="term" value="P:morphogenesis of an epithelium"/>
    <property type="evidence" value="ECO:0000315"/>
    <property type="project" value="MGI"/>
</dbReference>
<dbReference type="GO" id="GO:0060512">
    <property type="term" value="P:prostate gland morphogenesis"/>
    <property type="evidence" value="ECO:0000315"/>
    <property type="project" value="MGI"/>
</dbReference>
<dbReference type="GO" id="GO:0050678">
    <property type="term" value="P:regulation of epithelial cell proliferation"/>
    <property type="evidence" value="ECO:0000315"/>
    <property type="project" value="MGI"/>
</dbReference>
<dbReference type="CDD" id="cd02057">
    <property type="entry name" value="serpinB5_maspin"/>
    <property type="match status" value="1"/>
</dbReference>
<dbReference type="FunFam" id="3.30.497.10:FF:000009">
    <property type="entry name" value="serpin B5 isoform X2"/>
    <property type="match status" value="1"/>
</dbReference>
<dbReference type="FunFam" id="2.30.39.10:FF:000014">
    <property type="entry name" value="Serpin family B member 9"/>
    <property type="match status" value="1"/>
</dbReference>
<dbReference type="Gene3D" id="2.30.39.10">
    <property type="entry name" value="Alpha-1-antitrypsin, domain 1"/>
    <property type="match status" value="1"/>
</dbReference>
<dbReference type="Gene3D" id="3.30.497.10">
    <property type="entry name" value="Antithrombin, subunit I, domain 2"/>
    <property type="match status" value="1"/>
</dbReference>
<dbReference type="InterPro" id="IPR000240">
    <property type="entry name" value="Serpin_B9/Maspin"/>
</dbReference>
<dbReference type="InterPro" id="IPR023795">
    <property type="entry name" value="Serpin_CS"/>
</dbReference>
<dbReference type="InterPro" id="IPR023796">
    <property type="entry name" value="Serpin_dom"/>
</dbReference>
<dbReference type="InterPro" id="IPR000215">
    <property type="entry name" value="Serpin_fam"/>
</dbReference>
<dbReference type="InterPro" id="IPR036186">
    <property type="entry name" value="Serpin_sf"/>
</dbReference>
<dbReference type="InterPro" id="IPR042178">
    <property type="entry name" value="Serpin_sf_1"/>
</dbReference>
<dbReference type="InterPro" id="IPR042185">
    <property type="entry name" value="Serpin_sf_2"/>
</dbReference>
<dbReference type="InterPro" id="IPR033836">
    <property type="entry name" value="SERPINB5_serpin_dom"/>
</dbReference>
<dbReference type="PANTHER" id="PTHR11461">
    <property type="entry name" value="SERINE PROTEASE INHIBITOR, SERPIN"/>
    <property type="match status" value="1"/>
</dbReference>
<dbReference type="PANTHER" id="PTHR11461:SF55">
    <property type="entry name" value="SERPIN B5"/>
    <property type="match status" value="1"/>
</dbReference>
<dbReference type="Pfam" id="PF00079">
    <property type="entry name" value="Serpin"/>
    <property type="match status" value="1"/>
</dbReference>
<dbReference type="PRINTS" id="PR00676">
    <property type="entry name" value="MASPIN"/>
</dbReference>
<dbReference type="SMART" id="SM00093">
    <property type="entry name" value="SERPIN"/>
    <property type="match status" value="1"/>
</dbReference>
<dbReference type="SUPFAM" id="SSF56574">
    <property type="entry name" value="Serpins"/>
    <property type="match status" value="1"/>
</dbReference>
<dbReference type="PROSITE" id="PS00284">
    <property type="entry name" value="SERPIN"/>
    <property type="match status" value="1"/>
</dbReference>
<accession>P70124</accession>
<accession>Q3ULZ0</accession>
<evidence type="ECO:0000250" key="1"/>
<evidence type="ECO:0000255" key="2"/>
<evidence type="ECO:0000305" key="3"/>
<comment type="function">
    <text evidence="1">Tumor suppressor. It blocks the growth, invasion, and metastatic properties of mammary tumors. As it does not undergo the S (stressed) to R (relaxed) conformational transition characteristic of active serpins, it exhibits no serine protease inhibitory activity (By similarity).</text>
</comment>
<comment type="subunit">
    <text evidence="1">Interacts with IRF6.</text>
</comment>
<comment type="subcellular location">
    <subcellularLocation>
        <location>Secreted</location>
        <location>Extracellular space</location>
    </subcellularLocation>
</comment>
<comment type="similarity">
    <text evidence="3">Belongs to the serpin family. Ov-serpin subfamily.</text>
</comment>
<name>SPB5_MOUSE</name>
<gene>
    <name type="primary">Serpinb5</name>
    <name type="synonym">Pi5</name>
    <name type="synonym">Spi5</name>
    <name type="synonym">Spi7</name>
</gene>
<reference key="1">
    <citation type="journal article" date="1997" name="Mol. Med.">
        <title>mMaspin: the mouse homolog of a human tumor suppressor gene inhibits mammary tumor invasion and motility.</title>
        <authorList>
            <person name="Zhang M."/>
            <person name="Sheng S."/>
            <person name="Maass N."/>
            <person name="Sager R."/>
        </authorList>
    </citation>
    <scope>NUCLEOTIDE SEQUENCE [MRNA]</scope>
</reference>
<reference key="2">
    <citation type="journal article" date="2005" name="Science">
        <title>The transcriptional landscape of the mammalian genome.</title>
        <authorList>
            <person name="Carninci P."/>
            <person name="Kasukawa T."/>
            <person name="Katayama S."/>
            <person name="Gough J."/>
            <person name="Frith M.C."/>
            <person name="Maeda N."/>
            <person name="Oyama R."/>
            <person name="Ravasi T."/>
            <person name="Lenhard B."/>
            <person name="Wells C."/>
            <person name="Kodzius R."/>
            <person name="Shimokawa K."/>
            <person name="Bajic V.B."/>
            <person name="Brenner S.E."/>
            <person name="Batalov S."/>
            <person name="Forrest A.R."/>
            <person name="Zavolan M."/>
            <person name="Davis M.J."/>
            <person name="Wilming L.G."/>
            <person name="Aidinis V."/>
            <person name="Allen J.E."/>
            <person name="Ambesi-Impiombato A."/>
            <person name="Apweiler R."/>
            <person name="Aturaliya R.N."/>
            <person name="Bailey T.L."/>
            <person name="Bansal M."/>
            <person name="Baxter L."/>
            <person name="Beisel K.W."/>
            <person name="Bersano T."/>
            <person name="Bono H."/>
            <person name="Chalk A.M."/>
            <person name="Chiu K.P."/>
            <person name="Choudhary V."/>
            <person name="Christoffels A."/>
            <person name="Clutterbuck D.R."/>
            <person name="Crowe M.L."/>
            <person name="Dalla E."/>
            <person name="Dalrymple B.P."/>
            <person name="de Bono B."/>
            <person name="Della Gatta G."/>
            <person name="di Bernardo D."/>
            <person name="Down T."/>
            <person name="Engstrom P."/>
            <person name="Fagiolini M."/>
            <person name="Faulkner G."/>
            <person name="Fletcher C.F."/>
            <person name="Fukushima T."/>
            <person name="Furuno M."/>
            <person name="Futaki S."/>
            <person name="Gariboldi M."/>
            <person name="Georgii-Hemming P."/>
            <person name="Gingeras T.R."/>
            <person name="Gojobori T."/>
            <person name="Green R.E."/>
            <person name="Gustincich S."/>
            <person name="Harbers M."/>
            <person name="Hayashi Y."/>
            <person name="Hensch T.K."/>
            <person name="Hirokawa N."/>
            <person name="Hill D."/>
            <person name="Huminiecki L."/>
            <person name="Iacono M."/>
            <person name="Ikeo K."/>
            <person name="Iwama A."/>
            <person name="Ishikawa T."/>
            <person name="Jakt M."/>
            <person name="Kanapin A."/>
            <person name="Katoh M."/>
            <person name="Kawasawa Y."/>
            <person name="Kelso J."/>
            <person name="Kitamura H."/>
            <person name="Kitano H."/>
            <person name="Kollias G."/>
            <person name="Krishnan S.P."/>
            <person name="Kruger A."/>
            <person name="Kummerfeld S.K."/>
            <person name="Kurochkin I.V."/>
            <person name="Lareau L.F."/>
            <person name="Lazarevic D."/>
            <person name="Lipovich L."/>
            <person name="Liu J."/>
            <person name="Liuni S."/>
            <person name="McWilliam S."/>
            <person name="Madan Babu M."/>
            <person name="Madera M."/>
            <person name="Marchionni L."/>
            <person name="Matsuda H."/>
            <person name="Matsuzawa S."/>
            <person name="Miki H."/>
            <person name="Mignone F."/>
            <person name="Miyake S."/>
            <person name="Morris K."/>
            <person name="Mottagui-Tabar S."/>
            <person name="Mulder N."/>
            <person name="Nakano N."/>
            <person name="Nakauchi H."/>
            <person name="Ng P."/>
            <person name="Nilsson R."/>
            <person name="Nishiguchi S."/>
            <person name="Nishikawa S."/>
            <person name="Nori F."/>
            <person name="Ohara O."/>
            <person name="Okazaki Y."/>
            <person name="Orlando V."/>
            <person name="Pang K.C."/>
            <person name="Pavan W.J."/>
            <person name="Pavesi G."/>
            <person name="Pesole G."/>
            <person name="Petrovsky N."/>
            <person name="Piazza S."/>
            <person name="Reed J."/>
            <person name="Reid J.F."/>
            <person name="Ring B.Z."/>
            <person name="Ringwald M."/>
            <person name="Rost B."/>
            <person name="Ruan Y."/>
            <person name="Salzberg S.L."/>
            <person name="Sandelin A."/>
            <person name="Schneider C."/>
            <person name="Schoenbach C."/>
            <person name="Sekiguchi K."/>
            <person name="Semple C.A."/>
            <person name="Seno S."/>
            <person name="Sessa L."/>
            <person name="Sheng Y."/>
            <person name="Shibata Y."/>
            <person name="Shimada H."/>
            <person name="Shimada K."/>
            <person name="Silva D."/>
            <person name="Sinclair B."/>
            <person name="Sperling S."/>
            <person name="Stupka E."/>
            <person name="Sugiura K."/>
            <person name="Sultana R."/>
            <person name="Takenaka Y."/>
            <person name="Taki K."/>
            <person name="Tammoja K."/>
            <person name="Tan S.L."/>
            <person name="Tang S."/>
            <person name="Taylor M.S."/>
            <person name="Tegner J."/>
            <person name="Teichmann S.A."/>
            <person name="Ueda H.R."/>
            <person name="van Nimwegen E."/>
            <person name="Verardo R."/>
            <person name="Wei C.L."/>
            <person name="Yagi K."/>
            <person name="Yamanishi H."/>
            <person name="Zabarovsky E."/>
            <person name="Zhu S."/>
            <person name="Zimmer A."/>
            <person name="Hide W."/>
            <person name="Bult C."/>
            <person name="Grimmond S.M."/>
            <person name="Teasdale R.D."/>
            <person name="Liu E.T."/>
            <person name="Brusic V."/>
            <person name="Quackenbush J."/>
            <person name="Wahlestedt C."/>
            <person name="Mattick J.S."/>
            <person name="Hume D.A."/>
            <person name="Kai C."/>
            <person name="Sasaki D."/>
            <person name="Tomaru Y."/>
            <person name="Fukuda S."/>
            <person name="Kanamori-Katayama M."/>
            <person name="Suzuki M."/>
            <person name="Aoki J."/>
            <person name="Arakawa T."/>
            <person name="Iida J."/>
            <person name="Imamura K."/>
            <person name="Itoh M."/>
            <person name="Kato T."/>
            <person name="Kawaji H."/>
            <person name="Kawagashira N."/>
            <person name="Kawashima T."/>
            <person name="Kojima M."/>
            <person name="Kondo S."/>
            <person name="Konno H."/>
            <person name="Nakano K."/>
            <person name="Ninomiya N."/>
            <person name="Nishio T."/>
            <person name="Okada M."/>
            <person name="Plessy C."/>
            <person name="Shibata K."/>
            <person name="Shiraki T."/>
            <person name="Suzuki S."/>
            <person name="Tagami M."/>
            <person name="Waki K."/>
            <person name="Watahiki A."/>
            <person name="Okamura-Oho Y."/>
            <person name="Suzuki H."/>
            <person name="Kawai J."/>
            <person name="Hayashizaki Y."/>
        </authorList>
    </citation>
    <scope>NUCLEOTIDE SEQUENCE [LARGE SCALE MRNA]</scope>
    <source>
        <strain>C57BL/6J</strain>
        <tissue>Cecum</tissue>
        <tissue>Mammary gland</tissue>
    </source>
</reference>
<reference key="3">
    <citation type="submission" date="2005-09" db="EMBL/GenBank/DDBJ databases">
        <authorList>
            <person name="Mural R.J."/>
            <person name="Adams M.D."/>
            <person name="Myers E.W."/>
            <person name="Smith H.O."/>
            <person name="Venter J.C."/>
        </authorList>
    </citation>
    <scope>NUCLEOTIDE SEQUENCE [LARGE SCALE GENOMIC DNA]</scope>
</reference>
<reference key="4">
    <citation type="journal article" date="2004" name="Genome Res.">
        <title>The status, quality, and expansion of the NIH full-length cDNA project: the Mammalian Gene Collection (MGC).</title>
        <authorList>
            <consortium name="The MGC Project Team"/>
        </authorList>
    </citation>
    <scope>NUCLEOTIDE SEQUENCE [LARGE SCALE MRNA]</scope>
</reference>
<reference key="5">
    <citation type="journal article" date="2010" name="Cell">
        <title>A tissue-specific atlas of mouse protein phosphorylation and expression.</title>
        <authorList>
            <person name="Huttlin E.L."/>
            <person name="Jedrychowski M.P."/>
            <person name="Elias J.E."/>
            <person name="Goswami T."/>
            <person name="Rad R."/>
            <person name="Beausoleil S.A."/>
            <person name="Villen J."/>
            <person name="Haas W."/>
            <person name="Sowa M.E."/>
            <person name="Gygi S.P."/>
        </authorList>
    </citation>
    <scope>IDENTIFICATION BY MASS SPECTROMETRY [LARGE SCALE ANALYSIS]</scope>
    <source>
        <tissue>Liver</tissue>
    </source>
</reference>
<proteinExistence type="evidence at protein level"/>
<keyword id="KW-0325">Glycoprotein</keyword>
<keyword id="KW-1185">Reference proteome</keyword>
<keyword id="KW-0964">Secreted</keyword>
<protein>
    <recommendedName>
        <fullName>Serpin B5</fullName>
    </recommendedName>
    <alternativeName>
        <fullName>Maspin</fullName>
    </alternativeName>
    <alternativeName>
        <fullName>Peptidase inhibitor 5</fullName>
        <shortName>PI-5</shortName>
    </alternativeName>
</protein>
<sequence length="375" mass="42111">MDALRLANSAFAVDLFKQLCERDPAGNILFSPICLSTSLSLAQVGTKGDTANEIGQVLHFENVKDVPFGFQTVTSDVNKLSSFYSLKLVKRLYIDKSLNPSTEFISSTKRPYAKELETVDFKDKLEETKGQINSSIKELTDGHFEDILSENSISDQTKILVVNAAYFVGKWMKKFPESETKECPFRISKTDTKPVQMMNLEATFCLGNIDDISCKIIELPFQNKHLSMLIVLPKDVEDESTGLEKIEQQLNPETLLQWTNPSTMANAKVKLSLPKFKVEKMIDPKASLESLGLKSLFNESTSDFSGMSETKGVSLSNVIHRVCLEITEDGGESIEVPGSRILQHKDEFNADHPFIYIIRHNKTRNIIFFGKFCSP</sequence>